<comment type="function">
    <text evidence="1">Mediates the mercuric-dependent induction of mercury resistance operon. In the absence of mercury MerR represses transcription by binding tightly to the mer operator region; when mercury is present the dimeric complex binds a single ion and becomes a potent transcriptional activator, while remaining bound to the mer site (By similarity).</text>
</comment>
<reference key="1">
    <citation type="submission" date="1994-12" db="EMBL/GenBank/DDBJ databases">
        <title>Sequence conservation between regulatory mercury resistance genes from mercury polluted and pristine environments.</title>
        <authorList>
            <person name="Osborn A.M."/>
            <person name="Bruce K.D."/>
            <person name="Strike P."/>
            <person name="Ritchie D.A."/>
        </authorList>
    </citation>
    <scope>NUCLEOTIDE SEQUENCE [GENOMIC DNA]</scope>
    <source>
        <strain>SB4</strain>
    </source>
</reference>
<dbReference type="EMBL" id="Z33490">
    <property type="protein sequence ID" value="CAA83898.1"/>
    <property type="molecule type" value="Genomic_DNA"/>
</dbReference>
<dbReference type="PIR" id="S51749">
    <property type="entry name" value="S51749"/>
</dbReference>
<dbReference type="RefSeq" id="WP_003131969.1">
    <property type="nucleotide sequence ID" value="NZ_CAIGJY010000018.1"/>
</dbReference>
<dbReference type="SMR" id="P0A184"/>
<dbReference type="GO" id="GO:0003677">
    <property type="term" value="F:DNA binding"/>
    <property type="evidence" value="ECO:0007669"/>
    <property type="project" value="UniProtKB-KW"/>
</dbReference>
<dbReference type="GO" id="GO:0003700">
    <property type="term" value="F:DNA-binding transcription factor activity"/>
    <property type="evidence" value="ECO:0007669"/>
    <property type="project" value="InterPro"/>
</dbReference>
<dbReference type="GO" id="GO:0045340">
    <property type="term" value="F:mercury ion binding"/>
    <property type="evidence" value="ECO:0007669"/>
    <property type="project" value="InterPro"/>
</dbReference>
<dbReference type="GO" id="GO:0046689">
    <property type="term" value="P:response to mercury ion"/>
    <property type="evidence" value="ECO:0007669"/>
    <property type="project" value="UniProtKB-KW"/>
</dbReference>
<dbReference type="CDD" id="cd04783">
    <property type="entry name" value="HTH_MerR1"/>
    <property type="match status" value="1"/>
</dbReference>
<dbReference type="Gene3D" id="1.10.1660.10">
    <property type="match status" value="1"/>
</dbReference>
<dbReference type="InterPro" id="IPR009061">
    <property type="entry name" value="DNA-bd_dom_put_sf"/>
</dbReference>
<dbReference type="InterPro" id="IPR011794">
    <property type="entry name" value="MerR"/>
</dbReference>
<dbReference type="InterPro" id="IPR000551">
    <property type="entry name" value="MerR-type_HTH_dom"/>
</dbReference>
<dbReference type="InterPro" id="IPR047057">
    <property type="entry name" value="MerR_fam"/>
</dbReference>
<dbReference type="InterPro" id="IPR015358">
    <property type="entry name" value="Tscrpt_reg_MerR_DNA-bd"/>
</dbReference>
<dbReference type="NCBIfam" id="TIGR02051">
    <property type="entry name" value="MerR"/>
    <property type="match status" value="1"/>
</dbReference>
<dbReference type="NCBIfam" id="NF010315">
    <property type="entry name" value="PRK13752.1"/>
    <property type="match status" value="1"/>
</dbReference>
<dbReference type="PANTHER" id="PTHR30204:SF69">
    <property type="entry name" value="MERR-FAMILY TRANSCRIPTIONAL REGULATOR"/>
    <property type="match status" value="1"/>
</dbReference>
<dbReference type="PANTHER" id="PTHR30204">
    <property type="entry name" value="REDOX-CYCLING DRUG-SENSING TRANSCRIPTIONAL ACTIVATOR SOXR"/>
    <property type="match status" value="1"/>
</dbReference>
<dbReference type="Pfam" id="PF00376">
    <property type="entry name" value="MerR"/>
    <property type="match status" value="1"/>
</dbReference>
<dbReference type="Pfam" id="PF09278">
    <property type="entry name" value="MerR-DNA-bind"/>
    <property type="match status" value="1"/>
</dbReference>
<dbReference type="PRINTS" id="PR00040">
    <property type="entry name" value="HTHMERR"/>
</dbReference>
<dbReference type="SMART" id="SM00422">
    <property type="entry name" value="HTH_MERR"/>
    <property type="match status" value="1"/>
</dbReference>
<dbReference type="SUPFAM" id="SSF46955">
    <property type="entry name" value="Putative DNA-binding domain"/>
    <property type="match status" value="1"/>
</dbReference>
<dbReference type="PROSITE" id="PS00552">
    <property type="entry name" value="HTH_MERR_1"/>
    <property type="match status" value="1"/>
</dbReference>
<dbReference type="PROSITE" id="PS50937">
    <property type="entry name" value="HTH_MERR_2"/>
    <property type="match status" value="1"/>
</dbReference>
<organism>
    <name type="scientific">Pseudomonas fluorescens</name>
    <dbReference type="NCBI Taxonomy" id="294"/>
    <lineage>
        <taxon>Bacteria</taxon>
        <taxon>Pseudomonadati</taxon>
        <taxon>Pseudomonadota</taxon>
        <taxon>Gammaproteobacteria</taxon>
        <taxon>Pseudomonadales</taxon>
        <taxon>Pseudomonadaceae</taxon>
        <taxon>Pseudomonas</taxon>
    </lineage>
</organism>
<protein>
    <recommendedName>
        <fullName>Mercuric resistance operon regulatory protein</fullName>
    </recommendedName>
</protein>
<sequence>MENNLENLTIGVFAKAAGVNVETIRFYQRKGLLLEPDKPYGSIRRYGEADVTRVRFVKSAQRLGFSLDEIAELLRLEDGTHCEEASSLAEHKLKDVREKMADLARMEAVLSELVCACHARRGNVSCPLIASLQGGASLAGSAMP</sequence>
<accession>P0A184</accession>
<accession>P06688</accession>
<evidence type="ECO:0000250" key="1"/>
<evidence type="ECO:0000255" key="2">
    <source>
        <dbReference type="PROSITE-ProRule" id="PRU00254"/>
    </source>
</evidence>
<name>MERR_PSEFL</name>
<proteinExistence type="inferred from homology"/>
<geneLocation type="plasmid"/>
<gene>
    <name type="primary">merR</name>
</gene>
<keyword id="KW-0010">Activator</keyword>
<keyword id="KW-0238">DNA-binding</keyword>
<keyword id="KW-0475">Mercuric resistance</keyword>
<keyword id="KW-0476">Mercury</keyword>
<keyword id="KW-0479">Metal-binding</keyword>
<keyword id="KW-0614">Plasmid</keyword>
<keyword id="KW-0678">Repressor</keyword>
<keyword id="KW-0804">Transcription</keyword>
<keyword id="KW-0805">Transcription regulation</keyword>
<feature type="chain" id="PRO_0000098137" description="Mercuric resistance operon regulatory protein">
    <location>
        <begin position="1"/>
        <end position="144"/>
    </location>
</feature>
<feature type="domain" description="HTH merR-type" evidence="2">
    <location>
        <begin position="7"/>
        <end position="76"/>
    </location>
</feature>
<feature type="DNA-binding region" description="H-T-H motif" evidence="2">
    <location>
        <begin position="10"/>
        <end position="29"/>
    </location>
</feature>
<feature type="binding site" evidence="1">
    <location>
        <position position="82"/>
    </location>
    <ligand>
        <name>Hg(2+)</name>
        <dbReference type="ChEBI" id="CHEBI:16793"/>
    </ligand>
</feature>
<feature type="binding site" evidence="1">
    <location>
        <position position="117"/>
    </location>
    <ligand>
        <name>Hg(2+)</name>
        <dbReference type="ChEBI" id="CHEBI:16793"/>
    </ligand>
</feature>
<feature type="binding site" evidence="1">
    <location>
        <position position="126"/>
    </location>
    <ligand>
        <name>Hg(2+)</name>
        <dbReference type="ChEBI" id="CHEBI:16793"/>
    </ligand>
</feature>